<name>ATPG_WOLTR</name>
<proteinExistence type="inferred from homology"/>
<organism>
    <name type="scientific">Wolbachia sp. subsp. Brugia malayi (strain TRS)</name>
    <dbReference type="NCBI Taxonomy" id="292805"/>
    <lineage>
        <taxon>Bacteria</taxon>
        <taxon>Pseudomonadati</taxon>
        <taxon>Pseudomonadota</taxon>
        <taxon>Alphaproteobacteria</taxon>
        <taxon>Rickettsiales</taxon>
        <taxon>Anaplasmataceae</taxon>
        <taxon>Wolbachieae</taxon>
        <taxon>Wolbachia</taxon>
    </lineage>
</organism>
<dbReference type="EMBL" id="AE017321">
    <property type="protein sequence ID" value="AAW71293.1"/>
    <property type="molecule type" value="Genomic_DNA"/>
</dbReference>
<dbReference type="RefSeq" id="WP_011256902.1">
    <property type="nucleotide sequence ID" value="NC_006833.1"/>
</dbReference>
<dbReference type="SMR" id="Q5GRT1"/>
<dbReference type="STRING" id="292805.Wbm0705"/>
<dbReference type="KEGG" id="wbm:Wbm0705"/>
<dbReference type="eggNOG" id="COG0224">
    <property type="taxonomic scope" value="Bacteria"/>
</dbReference>
<dbReference type="HOGENOM" id="CLU_050669_4_0_5"/>
<dbReference type="Proteomes" id="UP000000534">
    <property type="component" value="Chromosome"/>
</dbReference>
<dbReference type="GO" id="GO:0005886">
    <property type="term" value="C:plasma membrane"/>
    <property type="evidence" value="ECO:0007669"/>
    <property type="project" value="UniProtKB-SubCell"/>
</dbReference>
<dbReference type="GO" id="GO:0045259">
    <property type="term" value="C:proton-transporting ATP synthase complex"/>
    <property type="evidence" value="ECO:0007669"/>
    <property type="project" value="UniProtKB-KW"/>
</dbReference>
<dbReference type="GO" id="GO:0005524">
    <property type="term" value="F:ATP binding"/>
    <property type="evidence" value="ECO:0007669"/>
    <property type="project" value="UniProtKB-UniRule"/>
</dbReference>
<dbReference type="GO" id="GO:0046933">
    <property type="term" value="F:proton-transporting ATP synthase activity, rotational mechanism"/>
    <property type="evidence" value="ECO:0007669"/>
    <property type="project" value="UniProtKB-UniRule"/>
</dbReference>
<dbReference type="GO" id="GO:0042777">
    <property type="term" value="P:proton motive force-driven plasma membrane ATP synthesis"/>
    <property type="evidence" value="ECO:0007669"/>
    <property type="project" value="UniProtKB-UniRule"/>
</dbReference>
<dbReference type="CDD" id="cd12151">
    <property type="entry name" value="F1-ATPase_gamma"/>
    <property type="match status" value="1"/>
</dbReference>
<dbReference type="Gene3D" id="3.40.1380.10">
    <property type="match status" value="1"/>
</dbReference>
<dbReference type="Gene3D" id="1.10.287.80">
    <property type="entry name" value="ATP synthase, gamma subunit, helix hairpin domain"/>
    <property type="match status" value="1"/>
</dbReference>
<dbReference type="HAMAP" id="MF_00815">
    <property type="entry name" value="ATP_synth_gamma_bact"/>
    <property type="match status" value="1"/>
</dbReference>
<dbReference type="InterPro" id="IPR035968">
    <property type="entry name" value="ATP_synth_F1_ATPase_gsu"/>
</dbReference>
<dbReference type="InterPro" id="IPR000131">
    <property type="entry name" value="ATP_synth_F1_gsu"/>
</dbReference>
<dbReference type="NCBIfam" id="TIGR01146">
    <property type="entry name" value="ATPsyn_F1gamma"/>
    <property type="match status" value="1"/>
</dbReference>
<dbReference type="PANTHER" id="PTHR11693">
    <property type="entry name" value="ATP SYNTHASE GAMMA CHAIN"/>
    <property type="match status" value="1"/>
</dbReference>
<dbReference type="PANTHER" id="PTHR11693:SF22">
    <property type="entry name" value="ATP SYNTHASE SUBUNIT GAMMA, MITOCHONDRIAL"/>
    <property type="match status" value="1"/>
</dbReference>
<dbReference type="Pfam" id="PF00231">
    <property type="entry name" value="ATP-synt"/>
    <property type="match status" value="1"/>
</dbReference>
<dbReference type="PRINTS" id="PR00126">
    <property type="entry name" value="ATPASEGAMMA"/>
</dbReference>
<dbReference type="SUPFAM" id="SSF52943">
    <property type="entry name" value="ATP synthase (F1-ATPase), gamma subunit"/>
    <property type="match status" value="1"/>
</dbReference>
<protein>
    <recommendedName>
        <fullName evidence="1">ATP synthase gamma chain</fullName>
    </recommendedName>
    <alternativeName>
        <fullName evidence="1">ATP synthase F1 sector gamma subunit</fullName>
    </alternativeName>
    <alternativeName>
        <fullName evidence="1">F-ATPase gamma subunit</fullName>
    </alternativeName>
</protein>
<sequence length="290" mass="32632">MKSLKELSLRIKNIRSVQKTTKIMQMVSAAKLLQSQKKLSNSKLYISKLHDIISSIMSSADQELLAKIFTTGDNDSYLVFIIASDRGLCGSFNSSIAKSSQEYVNKLIASSKKVDIVFLGKKAFDIGKNRFDSKSILKIENSKGITLKRVEALVDSMDLSKYDRIKVFYNKFYNTFTQKPMLETIKPWSKSSSLIDDYLTNSTIDYNYKYEPQNTEFILRSLIQNYVVTALYSALLESAASENSARMAAMESANRNTKEMLNKLALLYNCSRQAAITTDLIEVIGGAESL</sequence>
<feature type="chain" id="PRO_0000073418" description="ATP synthase gamma chain">
    <location>
        <begin position="1"/>
        <end position="290"/>
    </location>
</feature>
<accession>Q5GRT1</accession>
<gene>
    <name evidence="1" type="primary">atpG</name>
    <name type="ordered locus">Wbm0705</name>
</gene>
<evidence type="ECO:0000255" key="1">
    <source>
        <dbReference type="HAMAP-Rule" id="MF_00815"/>
    </source>
</evidence>
<keyword id="KW-0066">ATP synthesis</keyword>
<keyword id="KW-1003">Cell membrane</keyword>
<keyword id="KW-0139">CF(1)</keyword>
<keyword id="KW-0375">Hydrogen ion transport</keyword>
<keyword id="KW-0406">Ion transport</keyword>
<keyword id="KW-0472">Membrane</keyword>
<keyword id="KW-1185">Reference proteome</keyword>
<keyword id="KW-0813">Transport</keyword>
<comment type="function">
    <text evidence="1">Produces ATP from ADP in the presence of a proton gradient across the membrane. The gamma chain is believed to be important in regulating ATPase activity and the flow of protons through the CF(0) complex.</text>
</comment>
<comment type="subunit">
    <text evidence="1">F-type ATPases have 2 components, CF(1) - the catalytic core - and CF(0) - the membrane proton channel. CF(1) has five subunits: alpha(3), beta(3), gamma(1), delta(1), epsilon(1). CF(0) has three main subunits: a, b and c.</text>
</comment>
<comment type="subcellular location">
    <subcellularLocation>
        <location evidence="1">Cell membrane</location>
        <topology evidence="1">Peripheral membrane protein</topology>
    </subcellularLocation>
</comment>
<comment type="similarity">
    <text evidence="1">Belongs to the ATPase gamma chain family.</text>
</comment>
<reference key="1">
    <citation type="journal article" date="2005" name="PLoS Biol.">
        <title>The Wolbachia genome of Brugia malayi: endosymbiont evolution within a human pathogenic nematode.</title>
        <authorList>
            <person name="Foster J."/>
            <person name="Ganatra M."/>
            <person name="Kamal I."/>
            <person name="Ware J."/>
            <person name="Makarova K."/>
            <person name="Ivanova N."/>
            <person name="Bhattacharyya A."/>
            <person name="Kapatral V."/>
            <person name="Kumar S."/>
            <person name="Posfai J."/>
            <person name="Vincze T."/>
            <person name="Ingram J."/>
            <person name="Moran L."/>
            <person name="Lapidus A."/>
            <person name="Omelchenko M."/>
            <person name="Kyrpides N."/>
            <person name="Ghedin E."/>
            <person name="Wang S."/>
            <person name="Goltsman E."/>
            <person name="Joukov V."/>
            <person name="Ostrovskaya O."/>
            <person name="Tsukerman K."/>
            <person name="Mazur M."/>
            <person name="Comb D."/>
            <person name="Koonin E."/>
            <person name="Slatko B."/>
        </authorList>
    </citation>
    <scope>NUCLEOTIDE SEQUENCE [LARGE SCALE GENOMIC DNA]</scope>
    <source>
        <strain>TRS</strain>
    </source>
</reference>